<name>DXO_GIBZE</name>
<dbReference type="EC" id="3.6.1.-" evidence="5 1"/>
<dbReference type="EMBL" id="DS231666">
    <property type="protein sequence ID" value="ESU13595.1"/>
    <property type="status" value="ALT_SEQ"/>
    <property type="molecule type" value="Genomic_DNA"/>
</dbReference>
<dbReference type="EMBL" id="HG970335">
    <property type="protein sequence ID" value="CEF83313.1"/>
    <property type="molecule type" value="Genomic_DNA"/>
</dbReference>
<dbReference type="RefSeq" id="XP_011327102.1">
    <property type="nucleotide sequence ID" value="XM_011328800.1"/>
</dbReference>
<dbReference type="SMR" id="Q4I613"/>
<dbReference type="FunCoup" id="Q4I613">
    <property type="interactions" value="650"/>
</dbReference>
<dbReference type="STRING" id="229533.Q4I613"/>
<dbReference type="GeneID" id="23559938"/>
<dbReference type="KEGG" id="fgr:FGSG_13131"/>
<dbReference type="VEuPathDB" id="FungiDB:FGRAMPH1_01G24589"/>
<dbReference type="eggNOG" id="KOG1982">
    <property type="taxonomic scope" value="Eukaryota"/>
</dbReference>
<dbReference type="HOGENOM" id="CLU_024877_4_0_1"/>
<dbReference type="InParanoid" id="Q4I613"/>
<dbReference type="OrthoDB" id="4220at110618"/>
<dbReference type="Proteomes" id="UP000070720">
    <property type="component" value="Chromosome 4"/>
</dbReference>
<dbReference type="GO" id="GO:0005829">
    <property type="term" value="C:cytosol"/>
    <property type="evidence" value="ECO:0007669"/>
    <property type="project" value="TreeGrafter"/>
</dbReference>
<dbReference type="GO" id="GO:0005634">
    <property type="term" value="C:nucleus"/>
    <property type="evidence" value="ECO:0007669"/>
    <property type="project" value="UniProtKB-SubCell"/>
</dbReference>
<dbReference type="GO" id="GO:0046872">
    <property type="term" value="F:metal ion binding"/>
    <property type="evidence" value="ECO:0007669"/>
    <property type="project" value="UniProtKB-KW"/>
</dbReference>
<dbReference type="GO" id="GO:0034353">
    <property type="term" value="F:mRNA 5'-diphosphatase activity"/>
    <property type="evidence" value="ECO:0007669"/>
    <property type="project" value="TreeGrafter"/>
</dbReference>
<dbReference type="GO" id="GO:0004518">
    <property type="term" value="F:nuclease activity"/>
    <property type="evidence" value="ECO:0007669"/>
    <property type="project" value="UniProtKB-KW"/>
</dbReference>
<dbReference type="GO" id="GO:0000166">
    <property type="term" value="F:nucleotide binding"/>
    <property type="evidence" value="ECO:0007669"/>
    <property type="project" value="UniProtKB-KW"/>
</dbReference>
<dbReference type="GO" id="GO:0003723">
    <property type="term" value="F:RNA binding"/>
    <property type="evidence" value="ECO:0007669"/>
    <property type="project" value="UniProtKB-KW"/>
</dbReference>
<dbReference type="GO" id="GO:0110152">
    <property type="term" value="F:RNA NAD+-cap (NAD+-forming) hydrolase activity"/>
    <property type="evidence" value="ECO:0007669"/>
    <property type="project" value="RHEA"/>
</dbReference>
<dbReference type="GO" id="GO:0006397">
    <property type="term" value="P:mRNA processing"/>
    <property type="evidence" value="ECO:0007669"/>
    <property type="project" value="UniProtKB-KW"/>
</dbReference>
<dbReference type="GO" id="GO:0110155">
    <property type="term" value="P:NAD-cap decapping"/>
    <property type="evidence" value="ECO:0007669"/>
    <property type="project" value="TreeGrafter"/>
</dbReference>
<dbReference type="GO" id="GO:0000956">
    <property type="term" value="P:nuclear-transcribed mRNA catabolic process"/>
    <property type="evidence" value="ECO:0007669"/>
    <property type="project" value="TreeGrafter"/>
</dbReference>
<dbReference type="InterPro" id="IPR013961">
    <property type="entry name" value="RAI1"/>
</dbReference>
<dbReference type="InterPro" id="IPR039039">
    <property type="entry name" value="RAI1-like_fam"/>
</dbReference>
<dbReference type="PANTHER" id="PTHR12395:SF9">
    <property type="entry name" value="DECAPPING AND EXORIBONUCLEASE PROTEIN"/>
    <property type="match status" value="1"/>
</dbReference>
<dbReference type="PANTHER" id="PTHR12395">
    <property type="entry name" value="DOM-3 RELATED"/>
    <property type="match status" value="1"/>
</dbReference>
<dbReference type="Pfam" id="PF08652">
    <property type="entry name" value="RAI1"/>
    <property type="match status" value="1"/>
</dbReference>
<feature type="chain" id="PRO_0000249834" description="Decapping nuclease RAI1">
    <location>
        <begin position="1"/>
        <end position="376"/>
    </location>
</feature>
<feature type="binding site" evidence="1">
    <location>
        <position position="168"/>
    </location>
    <ligand>
        <name>a divalent metal cation</name>
        <dbReference type="ChEBI" id="CHEBI:60240"/>
    </ligand>
</feature>
<feature type="binding site" evidence="2">
    <location>
        <position position="200"/>
    </location>
    <ligand>
        <name>substrate</name>
    </ligand>
</feature>
<feature type="binding site" evidence="2">
    <location>
        <position position="217"/>
    </location>
    <ligand>
        <name>substrate</name>
    </ligand>
</feature>
<feature type="binding site" evidence="1">
    <location>
        <position position="219"/>
    </location>
    <ligand>
        <name>a divalent metal cation</name>
        <dbReference type="ChEBI" id="CHEBI:60240"/>
    </ligand>
</feature>
<feature type="binding site" evidence="1">
    <location>
        <position position="237"/>
    </location>
    <ligand>
        <name>a divalent metal cation</name>
        <dbReference type="ChEBI" id="CHEBI:60240"/>
    </ligand>
</feature>
<feature type="binding site" evidence="1">
    <location>
        <position position="238"/>
    </location>
    <ligand>
        <name>a divalent metal cation</name>
        <dbReference type="ChEBI" id="CHEBI:60240"/>
    </ligand>
</feature>
<feature type="binding site" evidence="2">
    <location>
        <position position="239"/>
    </location>
    <ligand>
        <name>substrate</name>
    </ligand>
</feature>
<feature type="binding site" evidence="2">
    <location>
        <position position="263"/>
    </location>
    <ligand>
        <name>substrate</name>
    </ligand>
</feature>
<organism>
    <name type="scientific">Gibberella zeae (strain ATCC MYA-4620 / CBS 123657 / FGSC 9075 / NRRL 31084 / PH-1)</name>
    <name type="common">Wheat head blight fungus</name>
    <name type="synonym">Fusarium graminearum</name>
    <dbReference type="NCBI Taxonomy" id="229533"/>
    <lineage>
        <taxon>Eukaryota</taxon>
        <taxon>Fungi</taxon>
        <taxon>Dikarya</taxon>
        <taxon>Ascomycota</taxon>
        <taxon>Pezizomycotina</taxon>
        <taxon>Sordariomycetes</taxon>
        <taxon>Hypocreomycetidae</taxon>
        <taxon>Hypocreales</taxon>
        <taxon>Nectriaceae</taxon>
        <taxon>Fusarium</taxon>
    </lineage>
</organism>
<proteinExistence type="inferred from homology"/>
<keyword id="KW-0378">Hydrolase</keyword>
<keyword id="KW-0479">Metal-binding</keyword>
<keyword id="KW-0507">mRNA processing</keyword>
<keyword id="KW-0540">Nuclease</keyword>
<keyword id="KW-0547">Nucleotide-binding</keyword>
<keyword id="KW-0539">Nucleus</keyword>
<keyword id="KW-1185">Reference proteome</keyword>
<keyword id="KW-0694">RNA-binding</keyword>
<gene>
    <name type="primary">RAI1</name>
    <name type="ORF">FGRRES_16819</name>
    <name type="ORF">FGSG_07345</name>
    <name type="ORF">FGSG_13131</name>
</gene>
<accession>Q4I613</accession>
<accession>A0A098DR17</accession>
<accession>A0A0E0SA50</accession>
<accession>I1S8F3</accession>
<comment type="function">
    <text evidence="1 2 4 5">Decapping enzyme for NAD-capped RNAs: specifically hydrolyzes the nicotinamide adenine dinucleotide (NAD) cap from a subset of RNAs by removing the entire NAD moiety from the 5'-end of an NAD-capped RNA (By similarity). The NAD-cap is present at the 5'-end of some RNAs and snoRNAs. In contrast to the canonical 5'-end N7 methylguanosine (m7G) cap, the NAD cap promotes mRNA decay (By similarity). Also acts as a non-canonical decapping enzyme that removes the entire cap structure of m7G capped or incompletely capped RNAs (By similarity). Has decapping activity toward incomplete 5'-end m7G cap mRNAs such as unmethylated 5'-end-capped RNA (cap0), while it has no activity toward 2'-O-ribose methylated m7G cap (cap1) (By similarity). Also possesses RNA 5'-pyrophosphohydrolase activity by hydrolyzing the 5'-end triphosphate to release pyrophosphates (By similarity). Stimulates exoribonuclease activity of Rat1, allowing it to degrade RNAs with stable secondary structure more effectively (By similarity).</text>
</comment>
<comment type="catalytic activity">
    <reaction evidence="1">
        <text>a 5'-end NAD(+)-phospho-ribonucleoside in mRNA + H2O = a 5'-end phospho-ribonucleoside in mRNA + NAD(+) + H(+)</text>
        <dbReference type="Rhea" id="RHEA:60880"/>
        <dbReference type="Rhea" id="RHEA-COMP:15692"/>
        <dbReference type="Rhea" id="RHEA-COMP:15698"/>
        <dbReference type="ChEBI" id="CHEBI:15377"/>
        <dbReference type="ChEBI" id="CHEBI:15378"/>
        <dbReference type="ChEBI" id="CHEBI:57540"/>
        <dbReference type="ChEBI" id="CHEBI:138282"/>
        <dbReference type="ChEBI" id="CHEBI:144029"/>
    </reaction>
    <physiologicalReaction direction="left-to-right" evidence="1">
        <dbReference type="Rhea" id="RHEA:60881"/>
    </physiologicalReaction>
</comment>
<comment type="catalytic activity">
    <reaction evidence="3">
        <text>a 5'-end (N(7)-methyl 5'-triphosphoguanosine)-ribonucleoside-ribonucleotide in mRNA + H2O = a (N(7)-methyl 5'-triphosphoguanosine)-nucleoside + a 5'-end phospho-ribonucleoside in mRNA + H(+)</text>
        <dbReference type="Rhea" id="RHEA:66928"/>
        <dbReference type="Rhea" id="RHEA-COMP:15692"/>
        <dbReference type="Rhea" id="RHEA-COMP:17313"/>
        <dbReference type="ChEBI" id="CHEBI:15377"/>
        <dbReference type="ChEBI" id="CHEBI:15378"/>
        <dbReference type="ChEBI" id="CHEBI:138282"/>
        <dbReference type="ChEBI" id="CHEBI:172876"/>
        <dbReference type="ChEBI" id="CHEBI:172877"/>
    </reaction>
    <physiologicalReaction direction="left-to-right" evidence="3">
        <dbReference type="Rhea" id="RHEA:66929"/>
    </physiologicalReaction>
</comment>
<comment type="catalytic activity">
    <reaction evidence="1">
        <text>a 5'-end triphospho-ribonucleoside in mRNA + H2O = a 5'-end phospho-ribonucleoside in mRNA + diphosphate + H(+)</text>
        <dbReference type="Rhea" id="RHEA:78683"/>
        <dbReference type="Rhea" id="RHEA-COMP:15692"/>
        <dbReference type="Rhea" id="RHEA-COMP:17164"/>
        <dbReference type="ChEBI" id="CHEBI:15377"/>
        <dbReference type="ChEBI" id="CHEBI:15378"/>
        <dbReference type="ChEBI" id="CHEBI:33019"/>
        <dbReference type="ChEBI" id="CHEBI:138282"/>
        <dbReference type="ChEBI" id="CHEBI:167618"/>
    </reaction>
    <physiologicalReaction direction="left-to-right" evidence="1">
        <dbReference type="Rhea" id="RHEA:78684"/>
    </physiologicalReaction>
</comment>
<comment type="cofactor">
    <cofactor evidence="5">
        <name>a divalent metal cation</name>
        <dbReference type="ChEBI" id="CHEBI:60240"/>
    </cofactor>
    <text evidence="5">Divalent metal cation.</text>
</comment>
<comment type="subunit">
    <text evidence="1">Interacts with RAT1; the interaction is direct, stabilizes RAT1 protein structure and stimulates its exoribonuclease activity (By similarity). The interaction also stimulates RAI1 pyrophosphohydrolase activity, probably by recruiting it to mRNA substrates (By similarity).</text>
</comment>
<comment type="subcellular location">
    <subcellularLocation>
        <location evidence="3">Nucleus</location>
    </subcellularLocation>
</comment>
<comment type="similarity">
    <text evidence="6">Belongs to the DXO/Dom3Z family.</text>
</comment>
<comment type="sequence caution" evidence="6">
    <conflict type="erroneous gene model prediction">
        <sequence resource="EMBL-CDS" id="ESU13595"/>
    </conflict>
</comment>
<protein>
    <recommendedName>
        <fullName evidence="6">Decapping nuclease RAI1</fullName>
        <ecNumber evidence="5">3.6.1.-</ecNumber>
    </recommendedName>
    <alternativeName>
        <fullName evidence="6">NAD-capped RNA hydrolase RAI1</fullName>
        <shortName evidence="6">DeNADding enzyme RAI1</shortName>
        <ecNumber evidence="1">3.6.1.-</ecNumber>
    </alternativeName>
</protein>
<sequence>MAARFSIQPIGRFAGESQPVKRPKEFACFSYDDNHEFRLDGSSLKYYYTPQLGADLSKGFDTFQKLDDTGDDHLDSLLKTIVAHEQETGKKIDANVVTWRGMMTKIMATPFDNMDGFEMNATLYQVCPSFIEENNAYKVASRSNEGNNNRRRRGPPLEVMQFWGYKFETLSTLPAPWAETPREFIENRENEVVNNKAQYCSVVRTGIGKSVLCLGGEVDAIWDSKPEEKGSPINWVELKTSAEIRNTGDMENFNRKLMKYWIQSFLLGVPRIVVGFRTRDGILVEAKDIETHRIPETVNSYPNPKWNADMCVNFAATFLDWLSANITDEGVWRIKREPQSPTIELFKVEETGHGDILSDEFKNWRIKLALGPSNES</sequence>
<evidence type="ECO:0000250" key="1">
    <source>
        <dbReference type="UniProtKB" id="O13836"/>
    </source>
</evidence>
<evidence type="ECO:0000250" key="2">
    <source>
        <dbReference type="UniProtKB" id="O70348"/>
    </source>
</evidence>
<evidence type="ECO:0000250" key="3">
    <source>
        <dbReference type="UniProtKB" id="P53063"/>
    </source>
</evidence>
<evidence type="ECO:0000250" key="4">
    <source>
        <dbReference type="UniProtKB" id="Q06349"/>
    </source>
</evidence>
<evidence type="ECO:0000250" key="5">
    <source>
        <dbReference type="UniProtKB" id="Q5AAT0"/>
    </source>
</evidence>
<evidence type="ECO:0000305" key="6"/>
<reference key="1">
    <citation type="journal article" date="2007" name="Science">
        <title>The Fusarium graminearum genome reveals a link between localized polymorphism and pathogen specialization.</title>
        <authorList>
            <person name="Cuomo C.A."/>
            <person name="Gueldener U."/>
            <person name="Xu J.-R."/>
            <person name="Trail F."/>
            <person name="Turgeon B.G."/>
            <person name="Di Pietro A."/>
            <person name="Walton J.D."/>
            <person name="Ma L.-J."/>
            <person name="Baker S.E."/>
            <person name="Rep M."/>
            <person name="Adam G."/>
            <person name="Antoniw J."/>
            <person name="Baldwin T."/>
            <person name="Calvo S.E."/>
            <person name="Chang Y.-L."/>
            <person name="DeCaprio D."/>
            <person name="Gale L.R."/>
            <person name="Gnerre S."/>
            <person name="Goswami R.S."/>
            <person name="Hammond-Kosack K."/>
            <person name="Harris L.J."/>
            <person name="Hilburn K."/>
            <person name="Kennell J.C."/>
            <person name="Kroken S."/>
            <person name="Magnuson J.K."/>
            <person name="Mannhaupt G."/>
            <person name="Mauceli E.W."/>
            <person name="Mewes H.-W."/>
            <person name="Mitterbauer R."/>
            <person name="Muehlbauer G."/>
            <person name="Muensterkoetter M."/>
            <person name="Nelson D."/>
            <person name="O'Donnell K."/>
            <person name="Ouellet T."/>
            <person name="Qi W."/>
            <person name="Quesneville H."/>
            <person name="Roncero M.I.G."/>
            <person name="Seong K.-Y."/>
            <person name="Tetko I.V."/>
            <person name="Urban M."/>
            <person name="Waalwijk C."/>
            <person name="Ward T.J."/>
            <person name="Yao J."/>
            <person name="Birren B.W."/>
            <person name="Kistler H.C."/>
        </authorList>
    </citation>
    <scope>NUCLEOTIDE SEQUENCE [LARGE SCALE GENOMIC DNA]</scope>
    <source>
        <strain>ATCC MYA-4620 / CBS 123657 / FGSC 9075 / NRRL 31084 / PH-1</strain>
    </source>
</reference>
<reference key="2">
    <citation type="journal article" date="2010" name="Nature">
        <title>Comparative genomics reveals mobile pathogenicity chromosomes in Fusarium.</title>
        <authorList>
            <person name="Ma L.-J."/>
            <person name="van der Does H.C."/>
            <person name="Borkovich K.A."/>
            <person name="Coleman J.J."/>
            <person name="Daboussi M.-J."/>
            <person name="Di Pietro A."/>
            <person name="Dufresne M."/>
            <person name="Freitag M."/>
            <person name="Grabherr M."/>
            <person name="Henrissat B."/>
            <person name="Houterman P.M."/>
            <person name="Kang S."/>
            <person name="Shim W.-B."/>
            <person name="Woloshuk C."/>
            <person name="Xie X."/>
            <person name="Xu J.-R."/>
            <person name="Antoniw J."/>
            <person name="Baker S.E."/>
            <person name="Bluhm B.H."/>
            <person name="Breakspear A."/>
            <person name="Brown D.W."/>
            <person name="Butchko R.A.E."/>
            <person name="Chapman S."/>
            <person name="Coulson R."/>
            <person name="Coutinho P.M."/>
            <person name="Danchin E.G.J."/>
            <person name="Diener A."/>
            <person name="Gale L.R."/>
            <person name="Gardiner D.M."/>
            <person name="Goff S."/>
            <person name="Hammond-Kosack K.E."/>
            <person name="Hilburn K."/>
            <person name="Hua-Van A."/>
            <person name="Jonkers W."/>
            <person name="Kazan K."/>
            <person name="Kodira C.D."/>
            <person name="Koehrsen M."/>
            <person name="Kumar L."/>
            <person name="Lee Y.-H."/>
            <person name="Li L."/>
            <person name="Manners J.M."/>
            <person name="Miranda-Saavedra D."/>
            <person name="Mukherjee M."/>
            <person name="Park G."/>
            <person name="Park J."/>
            <person name="Park S.-Y."/>
            <person name="Proctor R.H."/>
            <person name="Regev A."/>
            <person name="Ruiz-Roldan M.C."/>
            <person name="Sain D."/>
            <person name="Sakthikumar S."/>
            <person name="Sykes S."/>
            <person name="Schwartz D.C."/>
            <person name="Turgeon B.G."/>
            <person name="Wapinski I."/>
            <person name="Yoder O."/>
            <person name="Young S."/>
            <person name="Zeng Q."/>
            <person name="Zhou S."/>
            <person name="Galagan J."/>
            <person name="Cuomo C.A."/>
            <person name="Kistler H.C."/>
            <person name="Rep M."/>
        </authorList>
    </citation>
    <scope>GENOME REANNOTATION</scope>
    <source>
        <strain>ATCC MYA-4620 / CBS 123657 / FGSC 9075 / NRRL 31084 / PH-1</strain>
    </source>
</reference>
<reference key="3">
    <citation type="journal article" date="2015" name="BMC Genomics">
        <title>The completed genome sequence of the pathogenic ascomycete fungus Fusarium graminearum.</title>
        <authorList>
            <person name="King R."/>
            <person name="Urban M."/>
            <person name="Hammond-Kosack M.C.U."/>
            <person name="Hassani-Pak K."/>
            <person name="Hammond-Kosack K.E."/>
        </authorList>
    </citation>
    <scope>NUCLEOTIDE SEQUENCE [LARGE SCALE GENOMIC DNA]</scope>
    <source>
        <strain>ATCC MYA-4620 / CBS 123657 / FGSC 9075 / NRRL 31084 / PH-1</strain>
    </source>
</reference>